<name>GRF7_ARATH</name>
<evidence type="ECO:0000250" key="1"/>
<evidence type="ECO:0000255" key="2">
    <source>
        <dbReference type="PROSITE-ProRule" id="PRU01001"/>
    </source>
</evidence>
<evidence type="ECO:0000255" key="3">
    <source>
        <dbReference type="PROSITE-ProRule" id="PRU01002"/>
    </source>
</evidence>
<evidence type="ECO:0000256" key="4">
    <source>
        <dbReference type="SAM" id="MobiDB-lite"/>
    </source>
</evidence>
<evidence type="ECO:0000269" key="5">
    <source>
    </source>
</evidence>
<evidence type="ECO:0000269" key="6">
    <source>
    </source>
</evidence>
<evidence type="ECO:0000269" key="7">
    <source>
    </source>
</evidence>
<evidence type="ECO:0000305" key="8"/>
<keyword id="KW-0010">Activator</keyword>
<keyword id="KW-0539">Nucleus</keyword>
<keyword id="KW-1185">Reference proteome</keyword>
<keyword id="KW-0804">Transcription</keyword>
<keyword id="KW-0805">Transcription regulation</keyword>
<sequence length="365" mass="40410">MDFLKVSDKTTIPYRSDSLFSLNQQQYKESSFGFRDMEIHPHPTPYAGNGLLGCYYYYPFTNAQLKELERQAMIYKYMIASIPVPFDLLVSSPSSASPCNNKNIAGDLEPGRCRRTDGKKWRCAKEVVSNHKYCEKHLHRGRPRSRKHVEPPYSRPNNNGGSVKNRDLKKLPQKLSSSSIKDKTLEPMEVSSSISNYRDSRGSEKFTVLATTEQENKYLNFIDVWSDGVRSSEKQSTTSTPVSSSNGNLSLYSLDLSMGGNNLMGQDEMGLIQMGLGVIGSGSEDHHGYGPYGVTSSLEEMSSWLAPMSTTPGGPLAEILRPSTNLAISGDIESYSLMETPTPSSSPSRVMKKMTSSVSDESSQV</sequence>
<reference key="1">
    <citation type="journal article" date="1998" name="DNA Res.">
        <title>Structural analysis of Arabidopsis thaliana chromosome 5. VII. Sequence features of the regions of 1,013,767 bp covered by sixteen physically assigned P1 and TAC clones.</title>
        <authorList>
            <person name="Nakamura Y."/>
            <person name="Sato S."/>
            <person name="Asamizu E."/>
            <person name="Kaneko T."/>
            <person name="Kotani H."/>
            <person name="Miyajima N."/>
            <person name="Tabata S."/>
        </authorList>
    </citation>
    <scope>NUCLEOTIDE SEQUENCE [LARGE SCALE GENOMIC DNA]</scope>
    <source>
        <strain>cv. Columbia</strain>
    </source>
</reference>
<reference key="2">
    <citation type="journal article" date="2017" name="Plant J.">
        <title>Araport11: a complete reannotation of the Arabidopsis thaliana reference genome.</title>
        <authorList>
            <person name="Cheng C.Y."/>
            <person name="Krishnakumar V."/>
            <person name="Chan A.P."/>
            <person name="Thibaud-Nissen F."/>
            <person name="Schobel S."/>
            <person name="Town C.D."/>
        </authorList>
    </citation>
    <scope>GENOME REANNOTATION</scope>
    <source>
        <strain>cv. Columbia</strain>
    </source>
</reference>
<reference key="3">
    <citation type="journal article" date="2003" name="Science">
        <title>Empirical analysis of transcriptional activity in the Arabidopsis genome.</title>
        <authorList>
            <person name="Yamada K."/>
            <person name="Lim J."/>
            <person name="Dale J.M."/>
            <person name="Chen H."/>
            <person name="Shinn P."/>
            <person name="Palm C.J."/>
            <person name="Southwick A.M."/>
            <person name="Wu H.C."/>
            <person name="Kim C.J."/>
            <person name="Nguyen M."/>
            <person name="Pham P.K."/>
            <person name="Cheuk R.F."/>
            <person name="Karlin-Newmann G."/>
            <person name="Liu S.X."/>
            <person name="Lam B."/>
            <person name="Sakano H."/>
            <person name="Wu T."/>
            <person name="Yu G."/>
            <person name="Miranda M."/>
            <person name="Quach H.L."/>
            <person name="Tripp M."/>
            <person name="Chang C.H."/>
            <person name="Lee J.M."/>
            <person name="Toriumi M.J."/>
            <person name="Chan M.M."/>
            <person name="Tang C.C."/>
            <person name="Onodera C.S."/>
            <person name="Deng J.M."/>
            <person name="Akiyama K."/>
            <person name="Ansari Y."/>
            <person name="Arakawa T."/>
            <person name="Banh J."/>
            <person name="Banno F."/>
            <person name="Bowser L."/>
            <person name="Brooks S.Y."/>
            <person name="Carninci P."/>
            <person name="Chao Q."/>
            <person name="Choy N."/>
            <person name="Enju A."/>
            <person name="Goldsmith A.D."/>
            <person name="Gurjal M."/>
            <person name="Hansen N.F."/>
            <person name="Hayashizaki Y."/>
            <person name="Johnson-Hopson C."/>
            <person name="Hsuan V.W."/>
            <person name="Iida K."/>
            <person name="Karnes M."/>
            <person name="Khan S."/>
            <person name="Koesema E."/>
            <person name="Ishida J."/>
            <person name="Jiang P.X."/>
            <person name="Jones T."/>
            <person name="Kawai J."/>
            <person name="Kamiya A."/>
            <person name="Meyers C."/>
            <person name="Nakajima M."/>
            <person name="Narusaka M."/>
            <person name="Seki M."/>
            <person name="Sakurai T."/>
            <person name="Satou M."/>
            <person name="Tamse R."/>
            <person name="Vaysberg M."/>
            <person name="Wallender E.K."/>
            <person name="Wong C."/>
            <person name="Yamamura Y."/>
            <person name="Yuan S."/>
            <person name="Shinozaki K."/>
            <person name="Davis R.W."/>
            <person name="Theologis A."/>
            <person name="Ecker J.R."/>
        </authorList>
    </citation>
    <scope>NUCLEOTIDE SEQUENCE [LARGE SCALE MRNA]</scope>
    <source>
        <strain>cv. Columbia</strain>
    </source>
</reference>
<reference key="4">
    <citation type="submission" date="2004-09" db="EMBL/GenBank/DDBJ databases">
        <title>Large-scale analysis of RIKEN Arabidopsis full-length (RAFL) cDNAs.</title>
        <authorList>
            <person name="Totoki Y."/>
            <person name="Seki M."/>
            <person name="Ishida J."/>
            <person name="Nakajima M."/>
            <person name="Enju A."/>
            <person name="Kamiya A."/>
            <person name="Narusaka M."/>
            <person name="Shin-i T."/>
            <person name="Nakagawa M."/>
            <person name="Sakamoto N."/>
            <person name="Oishi K."/>
            <person name="Kohara Y."/>
            <person name="Kobayashi M."/>
            <person name="Toyoda A."/>
            <person name="Sakaki Y."/>
            <person name="Sakurai T."/>
            <person name="Iida K."/>
            <person name="Akiyama K."/>
            <person name="Satou M."/>
            <person name="Toyoda T."/>
            <person name="Konagaya A."/>
            <person name="Carninci P."/>
            <person name="Kawai J."/>
            <person name="Hayashizaki Y."/>
            <person name="Shinozaki K."/>
        </authorList>
    </citation>
    <scope>NUCLEOTIDE SEQUENCE [LARGE SCALE MRNA]</scope>
    <source>
        <strain>cv. Columbia</strain>
    </source>
</reference>
<reference key="5">
    <citation type="submission" date="2009-03" db="EMBL/GenBank/DDBJ databases">
        <title>ORF cloning and analysis of Arabidopsis transcription factor genes.</title>
        <authorList>
            <person name="Fujita M."/>
            <person name="Mizukado S."/>
            <person name="Seki M."/>
            <person name="Shinozaki K."/>
            <person name="Mitsuda N."/>
            <person name="Takiguchi Y."/>
            <person name="Takagi M."/>
        </authorList>
    </citation>
    <scope>NUCLEOTIDE SEQUENCE [LARGE SCALE MRNA]</scope>
</reference>
<reference key="6">
    <citation type="journal article" date="2003" name="Plant J.">
        <title>The AtGRF family of putative transcription factors is involved in leaf and cotyledon growth in Arabidopsis.</title>
        <authorList>
            <person name="Kim J.H."/>
            <person name="Choi D."/>
            <person name="Kende H."/>
        </authorList>
    </citation>
    <scope>GENE FAMILY</scope>
    <scope>NOMENCLATURE</scope>
    <scope>TISSUE SPECIFICITY</scope>
</reference>
<reference key="7">
    <citation type="journal article" date="2004" name="Mol. Cell">
        <title>Computational identification of plant microRNAs and their targets, including a stress-induced miRNA.</title>
        <authorList>
            <person name="Jones-Rhoades M.W."/>
            <person name="Bartel D.P."/>
        </authorList>
    </citation>
    <scope>INDUCTION</scope>
</reference>
<reference key="8">
    <citation type="journal article" date="2009" name="Physiol. Plantarum">
        <title>Ectopic expression of miR396 suppresses GRF target gene expression and alters leaf growth in Arabidopsis.</title>
        <authorList>
            <person name="Liu D."/>
            <person name="Song Y."/>
            <person name="Chen Z."/>
            <person name="Yu D."/>
        </authorList>
    </citation>
    <scope>INDUCTION</scope>
</reference>
<reference key="9">
    <citation type="journal article" date="2010" name="Development">
        <title>Control of cell proliferation in Arabidopsis thaliana by microRNA miR396.</title>
        <authorList>
            <person name="Rodriguez R.E."/>
            <person name="Mecchia M.A."/>
            <person name="Debernardi J.M."/>
            <person name="Schommer C."/>
            <person name="Weigel D."/>
            <person name="Palatnik J.F."/>
        </authorList>
    </citation>
    <scope>DEVELOPMENTAL STAGE</scope>
    <scope>INDUCTION</scope>
</reference>
<gene>
    <name type="primary">GRF7</name>
    <name type="ordered locus">At5g53660</name>
    <name type="ORF">MNC6.20</name>
</gene>
<organism>
    <name type="scientific">Arabidopsis thaliana</name>
    <name type="common">Mouse-ear cress</name>
    <dbReference type="NCBI Taxonomy" id="3702"/>
    <lineage>
        <taxon>Eukaryota</taxon>
        <taxon>Viridiplantae</taxon>
        <taxon>Streptophyta</taxon>
        <taxon>Embryophyta</taxon>
        <taxon>Tracheophyta</taxon>
        <taxon>Spermatophyta</taxon>
        <taxon>Magnoliopsida</taxon>
        <taxon>eudicotyledons</taxon>
        <taxon>Gunneridae</taxon>
        <taxon>Pentapetalae</taxon>
        <taxon>rosids</taxon>
        <taxon>malvids</taxon>
        <taxon>Brassicales</taxon>
        <taxon>Brassicaceae</taxon>
        <taxon>Camelineae</taxon>
        <taxon>Arabidopsis</taxon>
    </lineage>
</organism>
<dbReference type="EMBL" id="AB015476">
    <property type="protein sequence ID" value="BAB09742.1"/>
    <property type="molecule type" value="Genomic_DNA"/>
</dbReference>
<dbReference type="EMBL" id="CP002688">
    <property type="protein sequence ID" value="AED96392.1"/>
    <property type="molecule type" value="Genomic_DNA"/>
</dbReference>
<dbReference type="EMBL" id="AK176109">
    <property type="protein sequence ID" value="BAD43872.1"/>
    <property type="molecule type" value="mRNA"/>
</dbReference>
<dbReference type="EMBL" id="BT010882">
    <property type="protein sequence ID" value="AAR24660.1"/>
    <property type="molecule type" value="mRNA"/>
</dbReference>
<dbReference type="EMBL" id="AB493791">
    <property type="protein sequence ID" value="BAH30629.1"/>
    <property type="molecule type" value="mRNA"/>
</dbReference>
<dbReference type="RefSeq" id="NP_200177.1">
    <property type="nucleotide sequence ID" value="NM_124745.3"/>
</dbReference>
<dbReference type="BioGRID" id="20691">
    <property type="interactions" value="3"/>
</dbReference>
<dbReference type="STRING" id="3702.Q9FJB8"/>
<dbReference type="GlyGen" id="Q9FJB8">
    <property type="glycosylation" value="1 site"/>
</dbReference>
<dbReference type="PaxDb" id="3702-AT5G53660.1"/>
<dbReference type="EnsemblPlants" id="AT5G53660.1">
    <property type="protein sequence ID" value="AT5G53660.1"/>
    <property type="gene ID" value="AT5G53660"/>
</dbReference>
<dbReference type="GeneID" id="835447"/>
<dbReference type="Gramene" id="AT5G53660.1">
    <property type="protein sequence ID" value="AT5G53660.1"/>
    <property type="gene ID" value="AT5G53660"/>
</dbReference>
<dbReference type="KEGG" id="ath:AT5G53660"/>
<dbReference type="Araport" id="AT5G53660"/>
<dbReference type="TAIR" id="AT5G53660">
    <property type="gene designation" value="GRF7"/>
</dbReference>
<dbReference type="eggNOG" id="ENOG502QVS1">
    <property type="taxonomic scope" value="Eukaryota"/>
</dbReference>
<dbReference type="HOGENOM" id="CLU_850856_0_0_1"/>
<dbReference type="InParanoid" id="Q9FJB8"/>
<dbReference type="OMA" id="RDMEIHP"/>
<dbReference type="OrthoDB" id="1927209at2759"/>
<dbReference type="PhylomeDB" id="Q9FJB8"/>
<dbReference type="PRO" id="PR:Q9FJB8"/>
<dbReference type="Proteomes" id="UP000006548">
    <property type="component" value="Chromosome 5"/>
</dbReference>
<dbReference type="ExpressionAtlas" id="Q9FJB8">
    <property type="expression patterns" value="baseline and differential"/>
</dbReference>
<dbReference type="GO" id="GO:0005634">
    <property type="term" value="C:nucleus"/>
    <property type="evidence" value="ECO:0000250"/>
    <property type="project" value="TAIR"/>
</dbReference>
<dbReference type="GO" id="GO:0005524">
    <property type="term" value="F:ATP binding"/>
    <property type="evidence" value="ECO:0007669"/>
    <property type="project" value="InterPro"/>
</dbReference>
<dbReference type="GO" id="GO:0006351">
    <property type="term" value="P:DNA-templated transcription"/>
    <property type="evidence" value="ECO:0007669"/>
    <property type="project" value="InterPro"/>
</dbReference>
<dbReference type="GO" id="GO:0048366">
    <property type="term" value="P:leaf development"/>
    <property type="evidence" value="ECO:0000304"/>
    <property type="project" value="TAIR"/>
</dbReference>
<dbReference type="GO" id="GO:0006355">
    <property type="term" value="P:regulation of DNA-templated transcription"/>
    <property type="evidence" value="ECO:0007669"/>
    <property type="project" value="InterPro"/>
</dbReference>
<dbReference type="GO" id="GO:0010218">
    <property type="term" value="P:response to far red light"/>
    <property type="evidence" value="ECO:0000270"/>
    <property type="project" value="TAIR"/>
</dbReference>
<dbReference type="GO" id="GO:0010114">
    <property type="term" value="P:response to red light"/>
    <property type="evidence" value="ECO:0000270"/>
    <property type="project" value="TAIR"/>
</dbReference>
<dbReference type="InterPro" id="IPR014978">
    <property type="entry name" value="Gln-Leu-Gln_QLQ"/>
</dbReference>
<dbReference type="InterPro" id="IPR031137">
    <property type="entry name" value="GRF"/>
</dbReference>
<dbReference type="InterPro" id="IPR014977">
    <property type="entry name" value="WRC_dom"/>
</dbReference>
<dbReference type="PANTHER" id="PTHR31602">
    <property type="entry name" value="GROWTH-REGULATING FACTOR 5"/>
    <property type="match status" value="1"/>
</dbReference>
<dbReference type="PANTHER" id="PTHR31602:SF101">
    <property type="entry name" value="GROWTH-REGULATING FACTOR 7"/>
    <property type="match status" value="1"/>
</dbReference>
<dbReference type="Pfam" id="PF08880">
    <property type="entry name" value="QLQ"/>
    <property type="match status" value="1"/>
</dbReference>
<dbReference type="Pfam" id="PF08879">
    <property type="entry name" value="WRC"/>
    <property type="match status" value="1"/>
</dbReference>
<dbReference type="SMART" id="SM00951">
    <property type="entry name" value="QLQ"/>
    <property type="match status" value="1"/>
</dbReference>
<dbReference type="PROSITE" id="PS51666">
    <property type="entry name" value="QLQ"/>
    <property type="match status" value="1"/>
</dbReference>
<dbReference type="PROSITE" id="PS51667">
    <property type="entry name" value="WRC"/>
    <property type="match status" value="1"/>
</dbReference>
<protein>
    <recommendedName>
        <fullName>Growth-regulating factor 7</fullName>
        <shortName>AtGRF7</shortName>
    </recommendedName>
    <alternativeName>
        <fullName>Transcription activator GRF7</fullName>
    </alternativeName>
</protein>
<comment type="function">
    <text evidence="1">Transcription activator that plays a role in the regulation of cell expansion in leaf and cotyledons tissues. Component of a network formed by miR396, the GRFs and their interacting factors (GIFs) acting in the regulation of meristem function, at least partially through the control of cell proliferation.</text>
</comment>
<comment type="subcellular location">
    <subcellularLocation>
        <location evidence="3">Nucleus</location>
    </subcellularLocation>
</comment>
<comment type="developmental stage">
    <text evidence="7">Expressed during the early stages of leaf development and expression decreases with the maturation of the leaf.</text>
</comment>
<comment type="induction">
    <text evidence="5 6 7">microRNA 396 (miR396a or miR396b) negatively regulates growth-regulating factors (GRF1-4 and GRF7-9).</text>
</comment>
<comment type="domain">
    <text>The QLQ domain and WRC domain may be involved in protein-protein interaction and DNA-binding, respectively.</text>
</comment>
<comment type="similarity">
    <text evidence="8">Belongs to the GRF family.</text>
</comment>
<accession>Q9FJB8</accession>
<proteinExistence type="evidence at transcript level"/>
<feature type="chain" id="PRO_0000419298" description="Growth-regulating factor 7">
    <location>
        <begin position="1"/>
        <end position="365"/>
    </location>
</feature>
<feature type="domain" description="QLQ" evidence="2">
    <location>
        <begin position="59"/>
        <end position="94"/>
    </location>
</feature>
<feature type="domain" description="WRC" evidence="3">
    <location>
        <begin position="107"/>
        <end position="151"/>
    </location>
</feature>
<feature type="region of interest" description="Disordered" evidence="4">
    <location>
        <begin position="137"/>
        <end position="187"/>
    </location>
</feature>
<feature type="region of interest" description="Disordered" evidence="4">
    <location>
        <begin position="332"/>
        <end position="365"/>
    </location>
</feature>
<feature type="short sequence motif" description="Bipartite nuclear localization signal" evidence="3">
    <location>
        <begin position="112"/>
        <end position="122"/>
    </location>
</feature>
<feature type="short sequence motif" description="Bipartite nuclear localization signal" evidence="3">
    <location>
        <begin position="140"/>
        <end position="147"/>
    </location>
</feature>
<feature type="compositionally biased region" description="Basic residues" evidence="4">
    <location>
        <begin position="137"/>
        <end position="147"/>
    </location>
</feature>
<feature type="compositionally biased region" description="Polar residues" evidence="4">
    <location>
        <begin position="337"/>
        <end position="365"/>
    </location>
</feature>